<dbReference type="EC" id="1.12.99.-"/>
<dbReference type="EMBL" id="M34016">
    <property type="protein sequence ID" value="AAA72831.1"/>
    <property type="molecule type" value="Genomic_DNA"/>
</dbReference>
<dbReference type="PIR" id="A37777">
    <property type="entry name" value="A37777"/>
</dbReference>
<dbReference type="SMR" id="Q49178"/>
<dbReference type="GO" id="GO:0016491">
    <property type="term" value="F:oxidoreductase activity"/>
    <property type="evidence" value="ECO:0007669"/>
    <property type="project" value="UniProtKB-KW"/>
</dbReference>
<dbReference type="InterPro" id="IPR051349">
    <property type="entry name" value="Hydrogenase_assoc-protein"/>
</dbReference>
<dbReference type="PANTHER" id="PTHR42845">
    <property type="entry name" value="COENZYME F420-REDUCING HYDROGENASE, GAMMA SUBUNIT"/>
    <property type="match status" value="1"/>
</dbReference>
<dbReference type="PANTHER" id="PTHR42845:SF1">
    <property type="entry name" value="HYDROGENASE SMALL SUBUNIT"/>
    <property type="match status" value="1"/>
</dbReference>
<dbReference type="SUPFAM" id="SSF56770">
    <property type="entry name" value="HydA/Nqo6-like"/>
    <property type="match status" value="1"/>
</dbReference>
<gene>
    <name type="primary">mvhG</name>
</gene>
<accession>Q49178</accession>
<reference key="1">
    <citation type="journal article" date="1990" name="J. Bacteriol.">
        <title>Conservation of hydrogenase and polyferredoxin structures in the hyperthermophilic archaebacterium Methanothermus fervidus.</title>
        <authorList>
            <person name="Steigerwald V.J."/>
            <person name="Beckler G.S."/>
            <person name="Reeve J.N."/>
        </authorList>
    </citation>
    <scope>NUCLEOTIDE SEQUENCE [GENOMIC DNA]</scope>
</reference>
<sequence>EECEREKPPEGLAMDFIKRQFEIGEPEKDLCLIAQGLVCMGPATTSICGAQCPKVGIPCQGCYGPTKAVEDQGAKMISAIASDFGVEKDKTVDPEKVAEQLDDIVGTFYTYTLPASLIPMRVHKGGK</sequence>
<organism>
    <name type="scientific">Methanothermus fervidus</name>
    <dbReference type="NCBI Taxonomy" id="2180"/>
    <lineage>
        <taxon>Archaea</taxon>
        <taxon>Methanobacteriati</taxon>
        <taxon>Methanobacteriota</taxon>
        <taxon>Methanomada group</taxon>
        <taxon>Methanobacteria</taxon>
        <taxon>Methanobacteriales</taxon>
        <taxon>Methanothermaceae</taxon>
        <taxon>Methanothermus</taxon>
    </lineage>
</organism>
<evidence type="ECO:0000250" key="1"/>
<evidence type="ECO:0000305" key="2"/>
<feature type="chain" id="PRO_0000204356" description="F420-non-reducing hydrogenase subunit G">
    <location>
        <begin position="1" status="less than"/>
        <end position="127"/>
    </location>
</feature>
<feature type="non-terminal residue">
    <location>
        <position position="1"/>
    </location>
</feature>
<name>MVHG_METFE</name>
<proteinExistence type="inferred from homology"/>
<comment type="function">
    <text evidence="1">Part of a complex that provides reducing equivalents for heterodisulfide reductase.</text>
</comment>
<comment type="subunit">
    <text evidence="1">The F420-non-reducing hydrogenase is composed of three subunits; MvhA, MvhD and MvhG. It forms a complex with the heterodisulfide reductase (hdr) (By similarity).</text>
</comment>
<comment type="similarity">
    <text evidence="2">Belongs to the [NiFe]/[NiFeSe] hydrogenase small subunit family.</text>
</comment>
<keyword id="KW-0560">Oxidoreductase</keyword>
<protein>
    <recommendedName>
        <fullName>F420-non-reducing hydrogenase subunit G</fullName>
        <ecNumber>1.12.99.-</ecNumber>
    </recommendedName>
    <alternativeName>
        <fullName>Methyl viologen-reducing hydrogenase subunit gamma</fullName>
        <shortName>MVH subunit G</shortName>
    </alternativeName>
</protein>